<organism>
    <name type="scientific">Gibberella zeae (strain ATCC MYA-4620 / CBS 123657 / FGSC 9075 / NRRL 31084 / PH-1)</name>
    <name type="common">Wheat head blight fungus</name>
    <name type="synonym">Fusarium graminearum</name>
    <dbReference type="NCBI Taxonomy" id="229533"/>
    <lineage>
        <taxon>Eukaryota</taxon>
        <taxon>Fungi</taxon>
        <taxon>Dikarya</taxon>
        <taxon>Ascomycota</taxon>
        <taxon>Pezizomycotina</taxon>
        <taxon>Sordariomycetes</taxon>
        <taxon>Hypocreomycetidae</taxon>
        <taxon>Hypocreales</taxon>
        <taxon>Nectriaceae</taxon>
        <taxon>Fusarium</taxon>
    </lineage>
</organism>
<name>FGL3_GIBZE</name>
<proteinExistence type="evidence at protein level"/>
<comment type="function">
    <text evidence="5">Secreted mono- and diacylglycerol lipase involved in plant virulence (PubMed:25919623). Has a substrate preference for p-nitrophenyl esters with a carbon chain length of C10 (p-nitrophenyl caprate) (PubMed:25919623).</text>
</comment>
<comment type="catalytic activity">
    <reaction evidence="9">
        <text>a monoacylglycerol + H2O = glycerol + a fatty acid + H(+)</text>
        <dbReference type="Rhea" id="RHEA:15245"/>
        <dbReference type="ChEBI" id="CHEBI:15377"/>
        <dbReference type="ChEBI" id="CHEBI:15378"/>
        <dbReference type="ChEBI" id="CHEBI:17408"/>
        <dbReference type="ChEBI" id="CHEBI:17754"/>
        <dbReference type="ChEBI" id="CHEBI:28868"/>
    </reaction>
</comment>
<comment type="catalytic activity">
    <reaction evidence="5">
        <text>a diacylglycerol + H2O = a monoacylglycerol + a fatty acid + H(+)</text>
        <dbReference type="Rhea" id="RHEA:32731"/>
        <dbReference type="ChEBI" id="CHEBI:15377"/>
        <dbReference type="ChEBI" id="CHEBI:15378"/>
        <dbReference type="ChEBI" id="CHEBI:17408"/>
        <dbReference type="ChEBI" id="CHEBI:18035"/>
        <dbReference type="ChEBI" id="CHEBI:28868"/>
    </reaction>
</comment>
<comment type="biophysicochemical properties">
    <phDependence>
        <text evidence="5">Optimum pH is 7.0.</text>
    </phDependence>
    <temperatureDependence>
        <text evidence="5">Optimum temperature is 35 to 38 degrees Celsius.</text>
    </temperatureDependence>
</comment>
<comment type="subcellular location">
    <subcellularLocation>
        <location evidence="5">Secreted</location>
    </subcellularLocation>
</comment>
<comment type="induction">
    <text evidence="5">Transcript accumulation reached its highest level in 4 hour old cultures.</text>
</comment>
<comment type="similarity">
    <text evidence="8">Belongs to the AB hydrolase superfamily. Lipase family. Class 3 subfamily.</text>
</comment>
<reference key="1">
    <citation type="journal article" date="2007" name="Science">
        <title>The Fusarium graminearum genome reveals a link between localized polymorphism and pathogen specialization.</title>
        <authorList>
            <person name="Cuomo C.A."/>
            <person name="Gueldener U."/>
            <person name="Xu J.-R."/>
            <person name="Trail F."/>
            <person name="Turgeon B.G."/>
            <person name="Di Pietro A."/>
            <person name="Walton J.D."/>
            <person name="Ma L.-J."/>
            <person name="Baker S.E."/>
            <person name="Rep M."/>
            <person name="Adam G."/>
            <person name="Antoniw J."/>
            <person name="Baldwin T."/>
            <person name="Calvo S.E."/>
            <person name="Chang Y.-L."/>
            <person name="DeCaprio D."/>
            <person name="Gale L.R."/>
            <person name="Gnerre S."/>
            <person name="Goswami R.S."/>
            <person name="Hammond-Kosack K."/>
            <person name="Harris L.J."/>
            <person name="Hilburn K."/>
            <person name="Kennell J.C."/>
            <person name="Kroken S."/>
            <person name="Magnuson J.K."/>
            <person name="Mannhaupt G."/>
            <person name="Mauceli E.W."/>
            <person name="Mewes H.-W."/>
            <person name="Mitterbauer R."/>
            <person name="Muehlbauer G."/>
            <person name="Muensterkoetter M."/>
            <person name="Nelson D."/>
            <person name="O'Donnell K."/>
            <person name="Ouellet T."/>
            <person name="Qi W."/>
            <person name="Quesneville H."/>
            <person name="Roncero M.I.G."/>
            <person name="Seong K.-Y."/>
            <person name="Tetko I.V."/>
            <person name="Urban M."/>
            <person name="Waalwijk C."/>
            <person name="Ward T.J."/>
            <person name="Yao J."/>
            <person name="Birren B.W."/>
            <person name="Kistler H.C."/>
        </authorList>
    </citation>
    <scope>NUCLEOTIDE SEQUENCE [LARGE SCALE GENOMIC DNA]</scope>
    <source>
        <strain>ATCC MYA-4620 / CBS 123657 / FGSC 9075 / NRRL 31084 / PH-1</strain>
    </source>
</reference>
<reference key="2">
    <citation type="journal article" date="2010" name="Nature">
        <title>Comparative genomics reveals mobile pathogenicity chromosomes in Fusarium.</title>
        <authorList>
            <person name="Ma L.-J."/>
            <person name="van der Does H.C."/>
            <person name="Borkovich K.A."/>
            <person name="Coleman J.J."/>
            <person name="Daboussi M.-J."/>
            <person name="Di Pietro A."/>
            <person name="Dufresne M."/>
            <person name="Freitag M."/>
            <person name="Grabherr M."/>
            <person name="Henrissat B."/>
            <person name="Houterman P.M."/>
            <person name="Kang S."/>
            <person name="Shim W.-B."/>
            <person name="Woloshuk C."/>
            <person name="Xie X."/>
            <person name="Xu J.-R."/>
            <person name="Antoniw J."/>
            <person name="Baker S.E."/>
            <person name="Bluhm B.H."/>
            <person name="Breakspear A."/>
            <person name="Brown D.W."/>
            <person name="Butchko R.A.E."/>
            <person name="Chapman S."/>
            <person name="Coulson R."/>
            <person name="Coutinho P.M."/>
            <person name="Danchin E.G.J."/>
            <person name="Diener A."/>
            <person name="Gale L.R."/>
            <person name="Gardiner D.M."/>
            <person name="Goff S."/>
            <person name="Hammond-Kosack K.E."/>
            <person name="Hilburn K."/>
            <person name="Hua-Van A."/>
            <person name="Jonkers W."/>
            <person name="Kazan K."/>
            <person name="Kodira C.D."/>
            <person name="Koehrsen M."/>
            <person name="Kumar L."/>
            <person name="Lee Y.-H."/>
            <person name="Li L."/>
            <person name="Manners J.M."/>
            <person name="Miranda-Saavedra D."/>
            <person name="Mukherjee M."/>
            <person name="Park G."/>
            <person name="Park J."/>
            <person name="Park S.-Y."/>
            <person name="Proctor R.H."/>
            <person name="Regev A."/>
            <person name="Ruiz-Roldan M.C."/>
            <person name="Sain D."/>
            <person name="Sakthikumar S."/>
            <person name="Sykes S."/>
            <person name="Schwartz D.C."/>
            <person name="Turgeon B.G."/>
            <person name="Wapinski I."/>
            <person name="Yoder O."/>
            <person name="Young S."/>
            <person name="Zeng Q."/>
            <person name="Zhou S."/>
            <person name="Galagan J."/>
            <person name="Cuomo C.A."/>
            <person name="Kistler H.C."/>
            <person name="Rep M."/>
        </authorList>
    </citation>
    <scope>GENOME REANNOTATION</scope>
    <source>
        <strain>ATCC MYA-4620 / CBS 123657 / FGSC 9075 / NRRL 31084 / PH-1</strain>
    </source>
</reference>
<reference key="3">
    <citation type="journal article" date="2015" name="BMC Genomics">
        <title>The completed genome sequence of the pathogenic ascomycete fungus Fusarium graminearum.</title>
        <authorList>
            <person name="King R."/>
            <person name="Urban M."/>
            <person name="Hammond-Kosack M.C.U."/>
            <person name="Hassani-Pak K."/>
            <person name="Hammond-Kosack K.E."/>
        </authorList>
    </citation>
    <scope>NUCLEOTIDE SEQUENCE [LARGE SCALE GENOMIC DNA]</scope>
    <source>
        <strain>ATCC MYA-4620 / CBS 123657 / FGSC 9075 / NRRL 31084 / PH-1</strain>
    </source>
</reference>
<reference key="4">
    <citation type="journal article" date="2010" name="Enzyme Microb. Technol.">
        <title>Enzymatic properties and expression patterns of five extracellular lipases of Fusarium graminearum in vitro.</title>
        <authorList>
            <person name="Nguyen L.N."/>
            <person name="Dao T.T."/>
            <person name="Zivkovic T."/>
            <person name="Fehrholz M."/>
            <person name="Schaefer W."/>
            <person name="Salomon S."/>
        </authorList>
    </citation>
    <scope>FUNCTION</scope>
    <scope>CATALYTIC ACTIVITY</scope>
    <scope>BIOPHYSICOCHEMICAL PROPERTIES</scope>
    <scope>SUBCELLULAR LOCATION</scope>
    <scope>INDUCTION</scope>
</reference>
<evidence type="ECO:0000250" key="1">
    <source>
        <dbReference type="UniProtKB" id="A8PUY1"/>
    </source>
</evidence>
<evidence type="ECO:0000255" key="2"/>
<evidence type="ECO:0000255" key="3">
    <source>
        <dbReference type="PROSITE-ProRule" id="PRU00498"/>
    </source>
</evidence>
<evidence type="ECO:0000255" key="4">
    <source>
        <dbReference type="PROSITE-ProRule" id="PRU10037"/>
    </source>
</evidence>
<evidence type="ECO:0000269" key="5">
    <source>
    </source>
</evidence>
<evidence type="ECO:0000303" key="6">
    <source>
    </source>
</evidence>
<evidence type="ECO:0000303" key="7">
    <source>
    </source>
</evidence>
<evidence type="ECO:0000305" key="8"/>
<evidence type="ECO:0000305" key="9">
    <source>
    </source>
</evidence>
<dbReference type="EC" id="3.1.1.-" evidence="5"/>
<dbReference type="EMBL" id="HG970334">
    <property type="protein sequence ID" value="CEF86239.1"/>
    <property type="molecule type" value="Genomic_DNA"/>
</dbReference>
<dbReference type="RefSeq" id="XP_011323268.1">
    <property type="nucleotide sequence ID" value="XM_011324966.1"/>
</dbReference>
<dbReference type="SMR" id="I1RLL3"/>
<dbReference type="KEGG" id="fgr:FGSG_04818"/>
<dbReference type="VEuPathDB" id="FungiDB:FGRAMPH1_01G16387"/>
<dbReference type="eggNOG" id="KOG4569">
    <property type="taxonomic scope" value="Eukaryota"/>
</dbReference>
<dbReference type="HOGENOM" id="CLU_032957_9_0_1"/>
<dbReference type="InParanoid" id="I1RLL3"/>
<dbReference type="OrthoDB" id="28928at110618"/>
<dbReference type="Proteomes" id="UP000070720">
    <property type="component" value="Chromosome 3"/>
</dbReference>
<dbReference type="GO" id="GO:0005576">
    <property type="term" value="C:extracellular region"/>
    <property type="evidence" value="ECO:0007669"/>
    <property type="project" value="UniProtKB-SubCell"/>
</dbReference>
<dbReference type="GO" id="GO:0016787">
    <property type="term" value="F:hydrolase activity"/>
    <property type="evidence" value="ECO:0007669"/>
    <property type="project" value="UniProtKB-KW"/>
</dbReference>
<dbReference type="GO" id="GO:0046872">
    <property type="term" value="F:metal ion binding"/>
    <property type="evidence" value="ECO:0007669"/>
    <property type="project" value="UniProtKB-KW"/>
</dbReference>
<dbReference type="GO" id="GO:0016042">
    <property type="term" value="P:lipid catabolic process"/>
    <property type="evidence" value="ECO:0007669"/>
    <property type="project" value="UniProtKB-KW"/>
</dbReference>
<dbReference type="CDD" id="cd00519">
    <property type="entry name" value="Lipase_3"/>
    <property type="match status" value="1"/>
</dbReference>
<dbReference type="Gene3D" id="3.40.50.1820">
    <property type="entry name" value="alpha/beta hydrolase"/>
    <property type="match status" value="1"/>
</dbReference>
<dbReference type="InterPro" id="IPR029058">
    <property type="entry name" value="AB_hydrolase_fold"/>
</dbReference>
<dbReference type="InterPro" id="IPR002921">
    <property type="entry name" value="Fungal_lipase-type"/>
</dbReference>
<dbReference type="InterPro" id="IPR051218">
    <property type="entry name" value="Sec_MonoDiacylglyc_Lipase"/>
</dbReference>
<dbReference type="PANTHER" id="PTHR45856">
    <property type="entry name" value="ALPHA/BETA-HYDROLASES SUPERFAMILY PROTEIN"/>
    <property type="match status" value="1"/>
</dbReference>
<dbReference type="PANTHER" id="PTHR45856:SF24">
    <property type="entry name" value="FUNGAL LIPASE-LIKE DOMAIN-CONTAINING PROTEIN"/>
    <property type="match status" value="1"/>
</dbReference>
<dbReference type="Pfam" id="PF01764">
    <property type="entry name" value="Lipase_3"/>
    <property type="match status" value="1"/>
</dbReference>
<dbReference type="SUPFAM" id="SSF53474">
    <property type="entry name" value="alpha/beta-Hydrolases"/>
    <property type="match status" value="1"/>
</dbReference>
<dbReference type="PROSITE" id="PS00120">
    <property type="entry name" value="LIPASE_SER"/>
    <property type="match status" value="1"/>
</dbReference>
<gene>
    <name evidence="7" type="primary">FGL3</name>
    <name type="ORF">FG04818</name>
    <name type="ORF">FGRAMPH1_01T16387</name>
</gene>
<keyword id="KW-1015">Disulfide bond</keyword>
<keyword id="KW-0325">Glycoprotein</keyword>
<keyword id="KW-0378">Hydrolase</keyword>
<keyword id="KW-0442">Lipid degradation</keyword>
<keyword id="KW-0443">Lipid metabolism</keyword>
<keyword id="KW-0479">Metal-binding</keyword>
<keyword id="KW-1185">Reference proteome</keyword>
<keyword id="KW-0964">Secreted</keyword>
<keyword id="KW-0732">Signal</keyword>
<protein>
    <recommendedName>
        <fullName evidence="6">Secreted mono- and diacylglycerol lipase 3</fullName>
        <ecNumber evidence="5">3.1.1.-</ecNumber>
    </recommendedName>
</protein>
<sequence>MMFADDLVRMAVLRFITVALAAITNVANAVPTDATKRQDSNLPFPLAHFTNTVASVQNTYCGPTANTPGVKFGDQTLLHAIGDGDTVQRTNIYHSESLGIIVASQGTNLSSIVSQSHNIQAIPIIPDARLGLPFGSMVFAGWQNAWSKGWTDVSAALADTIKQFPNDQIIVTGHSQGAAISLLTALAIQNQFGNVSTIREIIAYGPPRVGTPAFADAFDTIFPGKYTGVVNGDDWVPSLPSQPIYRHPSGMVWINPANSTSWKYYPGQENPDGPDSRVIQMFYPGTLQFNWGDHQGIYMHSSMGTTQGPCPAQVGGF</sequence>
<accession>I1RLL3</accession>
<feature type="signal peptide" evidence="2">
    <location>
        <begin position="1"/>
        <end position="29"/>
    </location>
</feature>
<feature type="chain" id="PRO_0000459501" description="Secreted mono- and diacylglycerol lipase 3">
    <location>
        <begin position="30"/>
        <end position="317"/>
    </location>
</feature>
<feature type="active site" description="Nucleophile" evidence="4">
    <location>
        <position position="175"/>
    </location>
</feature>
<feature type="active site" evidence="1">
    <location>
        <position position="234"/>
    </location>
</feature>
<feature type="active site" evidence="1">
    <location>
        <position position="294"/>
    </location>
</feature>
<feature type="glycosylation site" description="N-linked (GlcNAc...) asparagine" evidence="3">
    <location>
        <position position="108"/>
    </location>
</feature>
<feature type="glycosylation site" description="N-linked (GlcNAc...) asparagine" evidence="3">
    <location>
        <position position="194"/>
    </location>
</feature>
<feature type="glycosylation site" description="N-linked (GlcNAc...) asparagine" evidence="3">
    <location>
        <position position="258"/>
    </location>
</feature>
<feature type="disulfide bond" evidence="1">
    <location>
        <begin position="61"/>
        <end position="310"/>
    </location>
</feature>